<name>COBQ_CLOBL</name>
<evidence type="ECO:0000255" key="1">
    <source>
        <dbReference type="HAMAP-Rule" id="MF_00028"/>
    </source>
</evidence>
<reference key="1">
    <citation type="submission" date="2007-06" db="EMBL/GenBank/DDBJ databases">
        <authorList>
            <person name="Brinkac L.M."/>
            <person name="Daugherty S."/>
            <person name="Dodson R.J."/>
            <person name="Madupu R."/>
            <person name="Brown J.L."/>
            <person name="Bruce D."/>
            <person name="Detter C."/>
            <person name="Munk C."/>
            <person name="Smith L.A."/>
            <person name="Smith T.J."/>
            <person name="White O."/>
            <person name="Brettin T.S."/>
        </authorList>
    </citation>
    <scope>NUCLEOTIDE SEQUENCE [LARGE SCALE GENOMIC DNA]</scope>
    <source>
        <strain>Langeland / NCTC 10281 / Type F</strain>
    </source>
</reference>
<sequence length="493" mass="55212">MAKIMIQGTASSVGKSLIVAALCRIFKQDGYSVCPFKSQNMSLNSYITLDGKEMGRAQVVQAYAAGLEPEAYMNPILLKPTSDKKCQIIVNGKVYGNSTAMGYHNLKLRFKDMLKEHFNKLEEDFDIVVMEGAGSPAEINLRDRDIVNMGMAELVDAPVLLVGDIDKGGVFASLAGTMLLLKDGEKERVKGTIINKFRGDVEILKPGLDMLEDIVHIPCLGVVPYTRLQLEDEDGAVEFNKKAYAPIDIAVIKMPHISNFTDLDALKSEEDVSIRFITSKEEFKEPDLLVIPGSKNTIEDLLYLRKCGLEESIKEYSKDGKIVGICGGYQVLGSKIKDPYKVETDLGEIDGLNLLDMETTFEKEKVTTRVSAKLIDEKIENTVYGYEIHMGISEYSENVKPLFKIYDKNGEKVDYFDGAINEKGNVMGTYIHGVFDGVSFREKIINELRVKKGLKKKKSQVYEHMREKELDKLADIVRQSLDMKKIYSIIGMK</sequence>
<feature type="chain" id="PRO_0000332331" description="Cobyric acid synthase">
    <location>
        <begin position="1"/>
        <end position="493"/>
    </location>
</feature>
<feature type="domain" description="GATase cobBQ-type" evidence="1">
    <location>
        <begin position="246"/>
        <end position="440"/>
    </location>
</feature>
<feature type="active site" description="Nucleophile" evidence="1">
    <location>
        <position position="326"/>
    </location>
</feature>
<feature type="active site" evidence="1">
    <location>
        <position position="432"/>
    </location>
</feature>
<protein>
    <recommendedName>
        <fullName evidence="1">Cobyric acid synthase</fullName>
    </recommendedName>
</protein>
<accession>A7GBV6</accession>
<comment type="function">
    <text evidence="1">Catalyzes amidations at positions B, D, E, and G on adenosylcobyrinic A,C-diamide. NH(2) groups are provided by glutamine, and one molecule of ATP is hydrogenolyzed for each amidation.</text>
</comment>
<comment type="pathway">
    <text evidence="1">Cofactor biosynthesis; adenosylcobalamin biosynthesis.</text>
</comment>
<comment type="similarity">
    <text evidence="1">Belongs to the CobB/CobQ family. CobQ subfamily.</text>
</comment>
<gene>
    <name evidence="1" type="primary">cobQ</name>
    <name type="ordered locus">CLI_1000</name>
</gene>
<organism>
    <name type="scientific">Clostridium botulinum (strain Langeland / NCTC 10281 / Type F)</name>
    <dbReference type="NCBI Taxonomy" id="441772"/>
    <lineage>
        <taxon>Bacteria</taxon>
        <taxon>Bacillati</taxon>
        <taxon>Bacillota</taxon>
        <taxon>Clostridia</taxon>
        <taxon>Eubacteriales</taxon>
        <taxon>Clostridiaceae</taxon>
        <taxon>Clostridium</taxon>
    </lineage>
</organism>
<proteinExistence type="inferred from homology"/>
<dbReference type="EMBL" id="CP000728">
    <property type="protein sequence ID" value="ABS42184.1"/>
    <property type="molecule type" value="Genomic_DNA"/>
</dbReference>
<dbReference type="RefSeq" id="WP_011987838.1">
    <property type="nucleotide sequence ID" value="NC_009699.1"/>
</dbReference>
<dbReference type="SMR" id="A7GBV6"/>
<dbReference type="KEGG" id="cbf:CLI_1000"/>
<dbReference type="HOGENOM" id="CLU_019250_2_2_9"/>
<dbReference type="UniPathway" id="UPA00148"/>
<dbReference type="Proteomes" id="UP000002410">
    <property type="component" value="Chromosome"/>
</dbReference>
<dbReference type="GO" id="GO:0015420">
    <property type="term" value="F:ABC-type vitamin B12 transporter activity"/>
    <property type="evidence" value="ECO:0007669"/>
    <property type="project" value="UniProtKB-UniRule"/>
</dbReference>
<dbReference type="GO" id="GO:0003824">
    <property type="term" value="F:catalytic activity"/>
    <property type="evidence" value="ECO:0007669"/>
    <property type="project" value="InterPro"/>
</dbReference>
<dbReference type="GO" id="GO:0009236">
    <property type="term" value="P:cobalamin biosynthetic process"/>
    <property type="evidence" value="ECO:0007669"/>
    <property type="project" value="UniProtKB-UniRule"/>
</dbReference>
<dbReference type="CDD" id="cd05389">
    <property type="entry name" value="CobQ_N"/>
    <property type="match status" value="1"/>
</dbReference>
<dbReference type="CDD" id="cd01750">
    <property type="entry name" value="GATase1_CobQ"/>
    <property type="match status" value="1"/>
</dbReference>
<dbReference type="Gene3D" id="3.40.50.880">
    <property type="match status" value="1"/>
</dbReference>
<dbReference type="Gene3D" id="3.40.50.300">
    <property type="entry name" value="P-loop containing nucleotide triphosphate hydrolases"/>
    <property type="match status" value="1"/>
</dbReference>
<dbReference type="HAMAP" id="MF_00028">
    <property type="entry name" value="CobQ"/>
    <property type="match status" value="1"/>
</dbReference>
<dbReference type="InterPro" id="IPR029062">
    <property type="entry name" value="Class_I_gatase-like"/>
</dbReference>
<dbReference type="InterPro" id="IPR002586">
    <property type="entry name" value="CobQ/CobB/MinD/ParA_Nub-bd_dom"/>
</dbReference>
<dbReference type="InterPro" id="IPR033949">
    <property type="entry name" value="CobQ_GATase1"/>
</dbReference>
<dbReference type="InterPro" id="IPR047045">
    <property type="entry name" value="CobQ_N"/>
</dbReference>
<dbReference type="InterPro" id="IPR004459">
    <property type="entry name" value="CobQ_synth"/>
</dbReference>
<dbReference type="InterPro" id="IPR011698">
    <property type="entry name" value="GATase_3"/>
</dbReference>
<dbReference type="InterPro" id="IPR027417">
    <property type="entry name" value="P-loop_NTPase"/>
</dbReference>
<dbReference type="NCBIfam" id="TIGR00313">
    <property type="entry name" value="cobQ"/>
    <property type="match status" value="1"/>
</dbReference>
<dbReference type="NCBIfam" id="NF001989">
    <property type="entry name" value="PRK00784.1"/>
    <property type="match status" value="1"/>
</dbReference>
<dbReference type="PANTHER" id="PTHR21343:SF1">
    <property type="entry name" value="COBYRIC ACID SYNTHASE"/>
    <property type="match status" value="1"/>
</dbReference>
<dbReference type="PANTHER" id="PTHR21343">
    <property type="entry name" value="DETHIOBIOTIN SYNTHETASE"/>
    <property type="match status" value="1"/>
</dbReference>
<dbReference type="Pfam" id="PF01656">
    <property type="entry name" value="CbiA"/>
    <property type="match status" value="1"/>
</dbReference>
<dbReference type="Pfam" id="PF07685">
    <property type="entry name" value="GATase_3"/>
    <property type="match status" value="1"/>
</dbReference>
<dbReference type="SUPFAM" id="SSF52317">
    <property type="entry name" value="Class I glutamine amidotransferase-like"/>
    <property type="match status" value="1"/>
</dbReference>
<dbReference type="SUPFAM" id="SSF52540">
    <property type="entry name" value="P-loop containing nucleoside triphosphate hydrolases"/>
    <property type="match status" value="1"/>
</dbReference>
<dbReference type="PROSITE" id="PS51274">
    <property type="entry name" value="GATASE_COBBQ"/>
    <property type="match status" value="1"/>
</dbReference>
<keyword id="KW-0169">Cobalamin biosynthesis</keyword>
<keyword id="KW-0315">Glutamine amidotransferase</keyword>